<proteinExistence type="evidence at protein level"/>
<sequence>MNNLLSAYVTMLLILLSISGGAIASENCNDTSGVHQKILVCIQNEIAKSETQIRNNISSKSIDYGFPDDFYSKQRLAIHEKCMLYINVGGQRGELLMNQCELSMLQGLDIYIQQYIEDVDNS</sequence>
<protein>
    <recommendedName>
        <fullName evidence="4">Antitoxin protein TsiV3</fullName>
    </recommendedName>
</protein>
<dbReference type="EMBL" id="AE003853">
    <property type="protein sequence ID" value="AAF96038.1"/>
    <property type="molecule type" value="Genomic_DNA"/>
</dbReference>
<dbReference type="PIR" id="G82500">
    <property type="entry name" value="G82500"/>
</dbReference>
<dbReference type="RefSeq" id="NP_232525.1">
    <property type="nucleotide sequence ID" value="NC_002506.1"/>
</dbReference>
<dbReference type="RefSeq" id="WP_001061295.1">
    <property type="nucleotide sequence ID" value="NZ_LT906615.1"/>
</dbReference>
<dbReference type="PDB" id="4NOO">
    <property type="method" value="X-ray"/>
    <property type="resolution" value="2.30 A"/>
    <property type="chains" value="B/D=25-122"/>
</dbReference>
<dbReference type="PDB" id="4NSO">
    <property type="method" value="X-ray"/>
    <property type="resolution" value="2.40 A"/>
    <property type="chains" value="B=26-122"/>
</dbReference>
<dbReference type="PDB" id="4NSR">
    <property type="method" value="X-ray"/>
    <property type="resolution" value="2.79 A"/>
    <property type="chains" value="A/B/C/D/E/F=26-122"/>
</dbReference>
<dbReference type="PDBsum" id="4NOO"/>
<dbReference type="PDBsum" id="4NSO"/>
<dbReference type="PDBsum" id="4NSR"/>
<dbReference type="SMR" id="Q9KN41"/>
<dbReference type="IntAct" id="Q9KN41">
    <property type="interactions" value="1"/>
</dbReference>
<dbReference type="MINT" id="Q9KN41"/>
<dbReference type="STRING" id="243277.VC_A0124"/>
<dbReference type="DNASU" id="2612882"/>
<dbReference type="EnsemblBacteria" id="AAF96038">
    <property type="protein sequence ID" value="AAF96038"/>
    <property type="gene ID" value="VC_A0124"/>
</dbReference>
<dbReference type="KEGG" id="vch:VC_A0124"/>
<dbReference type="PATRIC" id="fig|243277.26.peg.2764"/>
<dbReference type="HOGENOM" id="CLU_2025765_0_0_6"/>
<dbReference type="EvolutionaryTrace" id="Q9KN41"/>
<dbReference type="Proteomes" id="UP000000584">
    <property type="component" value="Chromosome 2"/>
</dbReference>
<dbReference type="GO" id="GO:0042802">
    <property type="term" value="F:identical protein binding"/>
    <property type="evidence" value="ECO:0000353"/>
    <property type="project" value="IntAct"/>
</dbReference>
<dbReference type="FunFam" id="1.10.8.1160:FF:000001">
    <property type="entry name" value="Uncharacterized protein"/>
    <property type="match status" value="1"/>
</dbReference>
<dbReference type="Gene3D" id="1.10.8.1160">
    <property type="match status" value="1"/>
</dbReference>
<dbReference type="InterPro" id="IPR049347">
    <property type="entry name" value="TsiV3"/>
</dbReference>
<dbReference type="InterPro" id="IPR049348">
    <property type="entry name" value="TsiV3_sf"/>
</dbReference>
<dbReference type="Pfam" id="PF20889">
    <property type="entry name" value="TsiV3"/>
    <property type="match status" value="1"/>
</dbReference>
<gene>
    <name evidence="4" type="primary">tsiV3</name>
    <name type="ordered locus">VC_A0124</name>
</gene>
<comment type="function">
    <text evidence="2">Immunity protein that plays a role in preventing early activation of toxin VgrG3.</text>
</comment>
<comment type="subunit">
    <text evidence="3">Homodimer; dimerization is critical for inhibitory activity (PubMed:24699653). Forms a heterotetramer with VgrG3 composed of one TsiV3 homodimer and two VgrG3 molecules (PubMed:24699653).</text>
</comment>
<comment type="interaction">
    <interactant intactId="EBI-9356338">
        <id>Q9KN41</id>
    </interactant>
    <interactant intactId="EBI-9356338">
        <id>Q9KN41</id>
        <label>tsiV3</label>
    </interactant>
    <organismsDiffer>false</organismsDiffer>
    <experiments>4</experiments>
</comment>
<comment type="interaction">
    <interactant intactId="EBI-9356338">
        <id>Q9KN41</id>
    </interactant>
    <interactant intactId="EBI-9356343">
        <id>Q9KN42</id>
        <label>vgrG3</label>
    </interactant>
    <organismsDiffer>false</organismsDiffer>
    <experiments>11</experiments>
</comment>
<comment type="disruption phenotype">
    <text evidence="2">Deletion mutant is susceptible to killing by V52 strain in a VgrG3-dependent manner.</text>
</comment>
<evidence type="ECO:0000255" key="1"/>
<evidence type="ECO:0000269" key="2">
    <source>
    </source>
</evidence>
<evidence type="ECO:0000269" key="3">
    <source>
    </source>
</evidence>
<evidence type="ECO:0000303" key="4">
    <source>
    </source>
</evidence>
<evidence type="ECO:0007744" key="5">
    <source>
        <dbReference type="PDB" id="4NOO"/>
    </source>
</evidence>
<evidence type="ECO:0007744" key="6">
    <source>
        <dbReference type="PDB" id="4NSO"/>
    </source>
</evidence>
<evidence type="ECO:0007744" key="7">
    <source>
        <dbReference type="PDB" id="4NSR"/>
    </source>
</evidence>
<evidence type="ECO:0007829" key="8">
    <source>
        <dbReference type="PDB" id="4NOO"/>
    </source>
</evidence>
<feature type="signal peptide" evidence="1">
    <location>
        <begin position="1"/>
        <end position="24"/>
    </location>
</feature>
<feature type="chain" id="PRO_5004328313" description="Antitoxin protein TsiV3" evidence="1">
    <location>
        <begin position="25"/>
        <end position="122"/>
    </location>
</feature>
<feature type="disulfide bond" evidence="5">
    <location>
        <begin position="28"/>
        <end position="41"/>
    </location>
</feature>
<feature type="disulfide bond" evidence="5">
    <location>
        <begin position="82"/>
        <end position="100"/>
    </location>
</feature>
<feature type="mutagenesis site" description="Greatly reduces VgrG3 binding affinity; when associated with A-92." evidence="3">
    <original>Q</original>
    <variation>A</variation>
    <location>
        <position position="91"/>
    </location>
</feature>
<feature type="mutagenesis site" description="Greatly reduces VgrG3 binding affinity; when associated with A-91." evidence="3">
    <original>R</original>
    <variation>A</variation>
    <location>
        <position position="92"/>
    </location>
</feature>
<feature type="helix" evidence="8">
    <location>
        <begin position="35"/>
        <end position="58"/>
    </location>
</feature>
<feature type="helix" evidence="8">
    <location>
        <begin position="62"/>
        <end position="64"/>
    </location>
</feature>
<feature type="helix" evidence="8">
    <location>
        <begin position="70"/>
        <end position="82"/>
    </location>
</feature>
<feature type="helix" evidence="8">
    <location>
        <begin position="83"/>
        <end position="87"/>
    </location>
</feature>
<feature type="helix" evidence="8">
    <location>
        <begin position="90"/>
        <end position="120"/>
    </location>
</feature>
<name>TSIV3_VIBCH</name>
<reference key="1">
    <citation type="journal article" date="2000" name="Nature">
        <title>DNA sequence of both chromosomes of the cholera pathogen Vibrio cholerae.</title>
        <authorList>
            <person name="Heidelberg J.F."/>
            <person name="Eisen J.A."/>
            <person name="Nelson W.C."/>
            <person name="Clayton R.A."/>
            <person name="Gwinn M.L."/>
            <person name="Dodson R.J."/>
            <person name="Haft D.H."/>
            <person name="Hickey E.K."/>
            <person name="Peterson J.D."/>
            <person name="Umayam L.A."/>
            <person name="Gill S.R."/>
            <person name="Nelson K.E."/>
            <person name="Read T.D."/>
            <person name="Tettelin H."/>
            <person name="Richardson D.L."/>
            <person name="Ermolaeva M.D."/>
            <person name="Vamathevan J.J."/>
            <person name="Bass S."/>
            <person name="Qin H."/>
            <person name="Dragoi I."/>
            <person name="Sellers P."/>
            <person name="McDonald L.A."/>
            <person name="Utterback T.R."/>
            <person name="Fleischmann R.D."/>
            <person name="Nierman W.C."/>
            <person name="White O."/>
            <person name="Salzberg S.L."/>
            <person name="Smith H.O."/>
            <person name="Colwell R.R."/>
            <person name="Mekalanos J.J."/>
            <person name="Venter J.C."/>
            <person name="Fraser C.M."/>
        </authorList>
    </citation>
    <scope>NUCLEOTIDE SEQUENCE [LARGE SCALE GENOMIC DNA]</scope>
    <source>
        <strain>ATCC 39315 / El Tor Inaba N16961</strain>
    </source>
</reference>
<reference key="2">
    <citation type="journal article" date="2013" name="PLoS Pathog.">
        <title>Dual expression profile of type VI secretion system immunity genes protects pandemic Vibrio cholerae.</title>
        <authorList>
            <person name="Miyata S.T."/>
            <person name="Unterweger D."/>
            <person name="Rudko S.P."/>
            <person name="Pukatzki S."/>
        </authorList>
    </citation>
    <scope>FUNCTION</scope>
    <scope>DISRUPTION PHENOTYPE</scope>
</reference>
<reference evidence="5" key="3">
    <citation type="journal article" date="2014" name="Acta Crystallogr. D">
        <title>Molecular mechanism for self-protection against the type VI secretion system in Vibrio cholerae.</title>
        <authorList>
            <person name="Yang X."/>
            <person name="Xu M."/>
            <person name="Wang Y."/>
            <person name="Xia P."/>
            <person name="Wang S."/>
            <person name="Ye B."/>
            <person name="Tong L."/>
            <person name="Jiang T."/>
            <person name="Fan Z."/>
        </authorList>
    </citation>
    <scope>X-RAY CRYSTALLOGRAPHY (2.30 ANGSTROMS) OF 25-122</scope>
    <scope>DISULFIDE BONDS</scope>
    <scope>INTERACTION WITH VGRG3</scope>
    <scope>MUTAGENESIS OF GLN-91 AND ARG-92</scope>
</reference>
<reference evidence="6 7" key="4">
    <citation type="journal article" date="2014" name="FEBS Lett.">
        <title>Structural basis for recognition of the type VI spike protein VgrG3 by a cognate immunity protein.</title>
        <authorList>
            <person name="Zhang J."/>
            <person name="Zhang H."/>
            <person name="Gao Z."/>
            <person name="Hu H."/>
            <person name="Dong C."/>
            <person name="Dong Y.H."/>
        </authorList>
    </citation>
    <scope>X-RAY CRYSTALLOGRAPHY (2.40 ANGSTROMS) OF 26-122</scope>
    <scope>INTERACTION WITH VGRG3</scope>
</reference>
<organism>
    <name type="scientific">Vibrio cholerae serotype O1 (strain ATCC 39315 / El Tor Inaba N16961)</name>
    <dbReference type="NCBI Taxonomy" id="243277"/>
    <lineage>
        <taxon>Bacteria</taxon>
        <taxon>Pseudomonadati</taxon>
        <taxon>Pseudomonadota</taxon>
        <taxon>Gammaproteobacteria</taxon>
        <taxon>Vibrionales</taxon>
        <taxon>Vibrionaceae</taxon>
        <taxon>Vibrio</taxon>
    </lineage>
</organism>
<keyword id="KW-0002">3D-structure</keyword>
<keyword id="KW-1015">Disulfide bond</keyword>
<keyword id="KW-1185">Reference proteome</keyword>
<keyword id="KW-0732">Signal</keyword>
<accession>Q9KN41</accession>